<comment type="function">
    <text evidence="1">Catalyzes the isomerization between 2-isopropylmalate and 3-isopropylmalate, via the formation of 2-isopropylmaleate.</text>
</comment>
<comment type="catalytic activity">
    <reaction evidence="1">
        <text>(2R,3S)-3-isopropylmalate = (2S)-2-isopropylmalate</text>
        <dbReference type="Rhea" id="RHEA:32287"/>
        <dbReference type="ChEBI" id="CHEBI:1178"/>
        <dbReference type="ChEBI" id="CHEBI:35121"/>
        <dbReference type="EC" id="4.2.1.33"/>
    </reaction>
</comment>
<comment type="pathway">
    <text evidence="1">Amino-acid biosynthesis; L-leucine biosynthesis; L-leucine from 3-methyl-2-oxobutanoate: step 2/4.</text>
</comment>
<comment type="subunit">
    <text evidence="1">Heterodimer of LeuC and LeuD.</text>
</comment>
<comment type="similarity">
    <text evidence="1">Belongs to the LeuD family. LeuD type 1 subfamily.</text>
</comment>
<gene>
    <name evidence="1" type="primary">leuD</name>
    <name type="ordered locus">bbp_494</name>
</gene>
<evidence type="ECO:0000255" key="1">
    <source>
        <dbReference type="HAMAP-Rule" id="MF_01031"/>
    </source>
</evidence>
<accession>P59516</accession>
<organism>
    <name type="scientific">Buchnera aphidicola subsp. Baizongia pistaciae (strain Bp)</name>
    <dbReference type="NCBI Taxonomy" id="224915"/>
    <lineage>
        <taxon>Bacteria</taxon>
        <taxon>Pseudomonadati</taxon>
        <taxon>Pseudomonadota</taxon>
        <taxon>Gammaproteobacteria</taxon>
        <taxon>Enterobacterales</taxon>
        <taxon>Erwiniaceae</taxon>
        <taxon>Buchnera</taxon>
    </lineage>
</organism>
<name>LEUD_BUCBP</name>
<protein>
    <recommendedName>
        <fullName evidence="1">3-isopropylmalate dehydratase small subunit</fullName>
        <ecNumber evidence="1">4.2.1.33</ecNumber>
    </recommendedName>
    <alternativeName>
        <fullName evidence="1">Alpha-IPM isomerase</fullName>
        <shortName evidence="1">IPMI</shortName>
    </alternativeName>
    <alternativeName>
        <fullName evidence="1">Isopropylmalate isomerase</fullName>
    </alternativeName>
</protein>
<dbReference type="EC" id="4.2.1.33" evidence="1"/>
<dbReference type="EMBL" id="AE016826">
    <property type="protein sequence ID" value="AAO27199.1"/>
    <property type="molecule type" value="Genomic_DNA"/>
</dbReference>
<dbReference type="RefSeq" id="WP_011091600.1">
    <property type="nucleotide sequence ID" value="NC_004545.1"/>
</dbReference>
<dbReference type="SMR" id="P59516"/>
<dbReference type="STRING" id="224915.bbp_494"/>
<dbReference type="KEGG" id="bab:bbp_494"/>
<dbReference type="eggNOG" id="COG0066">
    <property type="taxonomic scope" value="Bacteria"/>
</dbReference>
<dbReference type="HOGENOM" id="CLU_081378_0_3_6"/>
<dbReference type="OrthoDB" id="9777465at2"/>
<dbReference type="UniPathway" id="UPA00048">
    <property type="reaction ID" value="UER00071"/>
</dbReference>
<dbReference type="Proteomes" id="UP000000601">
    <property type="component" value="Chromosome"/>
</dbReference>
<dbReference type="GO" id="GO:0009316">
    <property type="term" value="C:3-isopropylmalate dehydratase complex"/>
    <property type="evidence" value="ECO:0007669"/>
    <property type="project" value="InterPro"/>
</dbReference>
<dbReference type="GO" id="GO:0003861">
    <property type="term" value="F:3-isopropylmalate dehydratase activity"/>
    <property type="evidence" value="ECO:0007669"/>
    <property type="project" value="UniProtKB-UniRule"/>
</dbReference>
<dbReference type="GO" id="GO:0009098">
    <property type="term" value="P:L-leucine biosynthetic process"/>
    <property type="evidence" value="ECO:0007669"/>
    <property type="project" value="UniProtKB-UniRule"/>
</dbReference>
<dbReference type="CDD" id="cd01577">
    <property type="entry name" value="IPMI_Swivel"/>
    <property type="match status" value="1"/>
</dbReference>
<dbReference type="FunFam" id="3.20.19.10:FF:000003">
    <property type="entry name" value="3-isopropylmalate dehydratase small subunit"/>
    <property type="match status" value="1"/>
</dbReference>
<dbReference type="Gene3D" id="3.20.19.10">
    <property type="entry name" value="Aconitase, domain 4"/>
    <property type="match status" value="1"/>
</dbReference>
<dbReference type="HAMAP" id="MF_01031">
    <property type="entry name" value="LeuD_type1"/>
    <property type="match status" value="1"/>
</dbReference>
<dbReference type="InterPro" id="IPR004431">
    <property type="entry name" value="3-IsopropMal_deHydase_ssu"/>
</dbReference>
<dbReference type="InterPro" id="IPR015928">
    <property type="entry name" value="Aconitase/3IPM_dehydase_swvl"/>
</dbReference>
<dbReference type="InterPro" id="IPR000573">
    <property type="entry name" value="AconitaseA/IPMdHydase_ssu_swvl"/>
</dbReference>
<dbReference type="InterPro" id="IPR033940">
    <property type="entry name" value="IPMI_Swivel"/>
</dbReference>
<dbReference type="InterPro" id="IPR050075">
    <property type="entry name" value="LeuD"/>
</dbReference>
<dbReference type="NCBIfam" id="TIGR00171">
    <property type="entry name" value="leuD"/>
    <property type="match status" value="1"/>
</dbReference>
<dbReference type="NCBIfam" id="NF002458">
    <property type="entry name" value="PRK01641.1"/>
    <property type="match status" value="1"/>
</dbReference>
<dbReference type="PANTHER" id="PTHR43345:SF5">
    <property type="entry name" value="3-ISOPROPYLMALATE DEHYDRATASE SMALL SUBUNIT"/>
    <property type="match status" value="1"/>
</dbReference>
<dbReference type="PANTHER" id="PTHR43345">
    <property type="entry name" value="3-ISOPROPYLMALATE DEHYDRATASE SMALL SUBUNIT 2-RELATED-RELATED"/>
    <property type="match status" value="1"/>
</dbReference>
<dbReference type="Pfam" id="PF00694">
    <property type="entry name" value="Aconitase_C"/>
    <property type="match status" value="1"/>
</dbReference>
<dbReference type="SUPFAM" id="SSF52016">
    <property type="entry name" value="LeuD/IlvD-like"/>
    <property type="match status" value="1"/>
</dbReference>
<reference key="1">
    <citation type="journal article" date="2003" name="Proc. Natl. Acad. Sci. U.S.A.">
        <title>Reductive genome evolution in Buchnera aphidicola.</title>
        <authorList>
            <person name="van Ham R.C.H.J."/>
            <person name="Kamerbeek J."/>
            <person name="Palacios C."/>
            <person name="Rausell C."/>
            <person name="Abascal F."/>
            <person name="Bastolla U."/>
            <person name="Fernandez J.M."/>
            <person name="Jimenez L."/>
            <person name="Postigo M."/>
            <person name="Silva F.J."/>
            <person name="Tamames J."/>
            <person name="Viguera E."/>
            <person name="Latorre A."/>
            <person name="Valencia A."/>
            <person name="Moran F."/>
            <person name="Moya A."/>
        </authorList>
    </citation>
    <scope>NUCLEOTIDE SEQUENCE [LARGE SCALE GENOMIC DNA]</scope>
    <source>
        <strain>Bp</strain>
    </source>
</reference>
<proteinExistence type="inferred from homology"/>
<keyword id="KW-0028">Amino-acid biosynthesis</keyword>
<keyword id="KW-0100">Branched-chain amino acid biosynthesis</keyword>
<keyword id="KW-0432">Leucine biosynthesis</keyword>
<keyword id="KW-0456">Lyase</keyword>
<keyword id="KW-1185">Reference proteome</keyword>
<sequence>MSKFIQHTGIVVPIDVSNVDTDVIIPKQFLQKITKKGFGKHLFNDWRYVDEKGTILNRKFILNNDIYKNGTILLARENFGCGSSREHAVWALVDYGFKTIIATSFSDIFYSNSLKNSLLPITLSKETIDILFQEVYKNMGMFISVNLLNNKIFVREKQYSFKINSFNKYCLMHGLDDIDLTLKYSSKILNYETLIPEFLKK</sequence>
<feature type="chain" id="PRO_0000141798" description="3-isopropylmalate dehydratase small subunit">
    <location>
        <begin position="1"/>
        <end position="201"/>
    </location>
</feature>